<proteinExistence type="inferred from homology"/>
<accession>A7TES0</accession>
<gene>
    <name evidence="1" type="primary">MDM34</name>
    <name type="ORF">Kpol_1050p23</name>
</gene>
<name>MDM34_VANPO</name>
<feature type="chain" id="PRO_0000384368" description="Mitochondrial distribution and morphology protein 34">
    <location>
        <begin position="1"/>
        <end position="567"/>
    </location>
</feature>
<feature type="domain" description="SMP-LTD" evidence="1">
    <location>
        <begin position="1"/>
        <end position="224"/>
    </location>
</feature>
<feature type="region of interest" description="Disordered" evidence="2">
    <location>
        <begin position="392"/>
        <end position="453"/>
    </location>
</feature>
<feature type="compositionally biased region" description="Polar residues" evidence="2">
    <location>
        <begin position="392"/>
        <end position="416"/>
    </location>
</feature>
<feature type="compositionally biased region" description="Low complexity" evidence="2">
    <location>
        <begin position="417"/>
        <end position="452"/>
    </location>
</feature>
<dbReference type="EMBL" id="DS480381">
    <property type="protein sequence ID" value="EDO19166.1"/>
    <property type="molecule type" value="Genomic_DNA"/>
</dbReference>
<dbReference type="RefSeq" id="XP_001647024.1">
    <property type="nucleotide sequence ID" value="XM_001646974.1"/>
</dbReference>
<dbReference type="FunCoup" id="A7TES0">
    <property type="interactions" value="78"/>
</dbReference>
<dbReference type="STRING" id="436907.A7TES0"/>
<dbReference type="GeneID" id="5547497"/>
<dbReference type="KEGG" id="vpo:Kpol_1050p23"/>
<dbReference type="eggNOG" id="ENOG502QT3W">
    <property type="taxonomic scope" value="Eukaryota"/>
</dbReference>
<dbReference type="HOGENOM" id="CLU_036329_0_0_1"/>
<dbReference type="InParanoid" id="A7TES0"/>
<dbReference type="OMA" id="PGCLERQ"/>
<dbReference type="OrthoDB" id="17927at2759"/>
<dbReference type="PhylomeDB" id="A7TES0"/>
<dbReference type="Proteomes" id="UP000000267">
    <property type="component" value="Unassembled WGS sequence"/>
</dbReference>
<dbReference type="GO" id="GO:0032865">
    <property type="term" value="C:ERMES complex"/>
    <property type="evidence" value="ECO:0007669"/>
    <property type="project" value="UniProtKB-UniRule"/>
</dbReference>
<dbReference type="GO" id="GO:0008289">
    <property type="term" value="F:lipid binding"/>
    <property type="evidence" value="ECO:0007669"/>
    <property type="project" value="UniProtKB-KW"/>
</dbReference>
<dbReference type="GO" id="GO:0000002">
    <property type="term" value="P:mitochondrial genome maintenance"/>
    <property type="evidence" value="ECO:0007669"/>
    <property type="project" value="UniProtKB-UniRule"/>
</dbReference>
<dbReference type="GO" id="GO:1990456">
    <property type="term" value="P:mitochondrion-endoplasmic reticulum membrane tethering"/>
    <property type="evidence" value="ECO:0007669"/>
    <property type="project" value="EnsemblFungi"/>
</dbReference>
<dbReference type="GO" id="GO:0015914">
    <property type="term" value="P:phospholipid transport"/>
    <property type="evidence" value="ECO:0007669"/>
    <property type="project" value="EnsemblFungi"/>
</dbReference>
<dbReference type="HAMAP" id="MF_03105">
    <property type="entry name" value="Mdm34"/>
    <property type="match status" value="1"/>
</dbReference>
<dbReference type="InterPro" id="IPR027536">
    <property type="entry name" value="Mdm34"/>
</dbReference>
<dbReference type="InterPro" id="IPR031468">
    <property type="entry name" value="SMP_LBD"/>
</dbReference>
<dbReference type="PANTHER" id="PTHR28185">
    <property type="entry name" value="MITOCHONDRIAL DISTRIBUTION AND MORPHOLOGY PROTEIN 34"/>
    <property type="match status" value="1"/>
</dbReference>
<dbReference type="PANTHER" id="PTHR28185:SF1">
    <property type="entry name" value="MITOCHONDRIAL DISTRIBUTION AND MORPHOLOGY PROTEIN 34"/>
    <property type="match status" value="1"/>
</dbReference>
<dbReference type="PROSITE" id="PS51847">
    <property type="entry name" value="SMP"/>
    <property type="match status" value="1"/>
</dbReference>
<protein>
    <recommendedName>
        <fullName evidence="1">Mitochondrial distribution and morphology protein 34</fullName>
    </recommendedName>
</protein>
<comment type="function">
    <text evidence="1">Component of the ERMES/MDM complex, which serves as a molecular tether to connect the endoplasmic reticulum (ER) and mitochondria. Components of this complex are involved in the control of mitochondrial shape and protein biogenesis, and function in nonvesicular lipid trafficking between the ER and mitochondria. MDM34 is required for the interaction of the ER-resident membrane protein MMM1 and the outer mitochondrial membrane-resident beta-barrel protein MDM10.</text>
</comment>
<comment type="subunit">
    <text evidence="1">Component of the ER-mitochondria encounter structure (ERMES) or MDM complex, composed of MMM1, MDM10, MDM12 and MDM34.</text>
</comment>
<comment type="subcellular location">
    <subcellularLocation>
        <location evidence="1">Mitochondrion outer membrane</location>
        <topology evidence="1">Multi-pass membrane protein</topology>
    </subcellularLocation>
    <text evidence="1">The ERMES/MDM complex localizes to a few discrete foci (around 10 per single cell), that represent mitochondria-endoplasmic reticulum junctions. These foci are often found next to mtDNA nucleoids.</text>
</comment>
<comment type="domain">
    <text evidence="1">Lacks alpha-helical transmembrane segments, suggesting that it resides in the membrane via beta-sheet conformations similar to those predicted for other outer membrane proteins and porin.</text>
</comment>
<comment type="domain">
    <text evidence="1">The SMP-LTD domain is a barrel-like domain that can bind various types of glycerophospholipids in its interior and mediate their transfer between two adjacent bilayers.</text>
</comment>
<comment type="similarity">
    <text evidence="1">Belongs to the MDM34 family.</text>
</comment>
<organism>
    <name type="scientific">Vanderwaltozyma polyspora (strain ATCC 22028 / DSM 70294 / BCRC 21397 / CBS 2163 / NBRC 10782 / NRRL Y-8283 / UCD 57-17)</name>
    <name type="common">Kluyveromyces polysporus</name>
    <dbReference type="NCBI Taxonomy" id="436907"/>
    <lineage>
        <taxon>Eukaryota</taxon>
        <taxon>Fungi</taxon>
        <taxon>Dikarya</taxon>
        <taxon>Ascomycota</taxon>
        <taxon>Saccharomycotina</taxon>
        <taxon>Saccharomycetes</taxon>
        <taxon>Saccharomycetales</taxon>
        <taxon>Saccharomycetaceae</taxon>
        <taxon>Vanderwaltozyma</taxon>
    </lineage>
</organism>
<keyword id="KW-0445">Lipid transport</keyword>
<keyword id="KW-0446">Lipid-binding</keyword>
<keyword id="KW-0472">Membrane</keyword>
<keyword id="KW-0496">Mitochondrion</keyword>
<keyword id="KW-1000">Mitochondrion outer membrane</keyword>
<keyword id="KW-1185">Reference proteome</keyword>
<keyword id="KW-0812">Transmembrane</keyword>
<keyword id="KW-1134">Transmembrane beta strand</keyword>
<keyword id="KW-0813">Transport</keyword>
<reference key="1">
    <citation type="journal article" date="2007" name="Proc. Natl. Acad. Sci. U.S.A.">
        <title>Independent sorting-out of thousands of duplicated gene pairs in two yeast species descended from a whole-genome duplication.</title>
        <authorList>
            <person name="Scannell D.R."/>
            <person name="Frank A.C."/>
            <person name="Conant G.C."/>
            <person name="Byrne K.P."/>
            <person name="Woolfit M."/>
            <person name="Wolfe K.H."/>
        </authorList>
    </citation>
    <scope>NUCLEOTIDE SEQUENCE [LARGE SCALE GENOMIC DNA]</scope>
    <source>
        <strain>ATCC 22028 / DSM 70294 / BCRC 21397 / CBS 2163 / NBRC 10782 / NRRL Y-8283 / UCD 57-17</strain>
    </source>
</reference>
<evidence type="ECO:0000255" key="1">
    <source>
        <dbReference type="HAMAP-Rule" id="MF_03105"/>
    </source>
</evidence>
<evidence type="ECO:0000256" key="2">
    <source>
        <dbReference type="SAM" id="MobiDB-lite"/>
    </source>
</evidence>
<sequence length="567" mass="63691">MSFKFNEESFLDNSFNETLREKLTKMLNSRKSMDIKIDDHLSYANNRGSTSCSNNFDNSSSIKARDSKLDILKSDVKVCEVNFPTIPNLEILDLDVSGQPRALAKGICKISCRDALLQIQTEIEANSLLLYTNISPDFTTPLMIANDTFTIPITMTFSQIQLEAITNVFVKNSGVGISFNDVSLDFQFDCSIKLLQPHIAKRLRKSMQLVFKDVLPSALFNMSRSWFTHDGSSSQTTTDHSQEEGSRLIRLHRLTVEDLDLQDLSPVNMLKLSTLTSSRQTLSLHSTMPKYFSTIPGCLDRQNFRNFTSRMPCLSNYGGGSDDGDKHVPHIHNLQNKNLLPEEALEENDIDLKAILSIQTKIYERGISTNNDVIRPRRRKIRIKRAKKSIVNKATETSSNLNADSEITPVSSSHNATSSVNTITSLTTSSLGSTAGSSNSKNTNRSSSFTSSIMPITPLAQSSMNKKDGNLITLRQDSKVLDSMKYFTKIQDLHNIHASFNSSRETQDSNNRFRIASEMLPTKREISPIPTLNSFIEPNRRFSFVGLNHKTSHDNSWSVDEQPPPYY</sequence>